<protein>
    <recommendedName>
        <fullName evidence="1">DNA repair protein RecO</fullName>
    </recommendedName>
    <alternativeName>
        <fullName evidence="1">Recombination protein O</fullName>
    </alternativeName>
</protein>
<accession>Q8DWM0</accession>
<gene>
    <name evidence="1" type="primary">recO</name>
    <name type="ordered locus">SMU_25</name>
</gene>
<evidence type="ECO:0000255" key="1">
    <source>
        <dbReference type="HAMAP-Rule" id="MF_00201"/>
    </source>
</evidence>
<reference key="1">
    <citation type="journal article" date="2002" name="Proc. Natl. Acad. Sci. U.S.A.">
        <title>Genome sequence of Streptococcus mutans UA159, a cariogenic dental pathogen.</title>
        <authorList>
            <person name="Ajdic D.J."/>
            <person name="McShan W.M."/>
            <person name="McLaughlin R.E."/>
            <person name="Savic G."/>
            <person name="Chang J."/>
            <person name="Carson M.B."/>
            <person name="Primeaux C."/>
            <person name="Tian R."/>
            <person name="Kenton S."/>
            <person name="Jia H.G."/>
            <person name="Lin S.P."/>
            <person name="Qian Y."/>
            <person name="Li S."/>
            <person name="Zhu H."/>
            <person name="Najar F.Z."/>
            <person name="Lai H."/>
            <person name="White J."/>
            <person name="Roe B.A."/>
            <person name="Ferretti J.J."/>
        </authorList>
    </citation>
    <scope>NUCLEOTIDE SEQUENCE [LARGE SCALE GENOMIC DNA]</scope>
    <source>
        <strain>ATCC 700610 / UA159</strain>
    </source>
</reference>
<dbReference type="EMBL" id="AE014133">
    <property type="protein sequence ID" value="AAN57814.1"/>
    <property type="molecule type" value="Genomic_DNA"/>
</dbReference>
<dbReference type="RefSeq" id="NP_720508.1">
    <property type="nucleotide sequence ID" value="NC_004350.2"/>
</dbReference>
<dbReference type="RefSeq" id="WP_002263137.1">
    <property type="nucleotide sequence ID" value="NC_004350.2"/>
</dbReference>
<dbReference type="SMR" id="Q8DWM0"/>
<dbReference type="STRING" id="210007.SMU_25"/>
<dbReference type="GeneID" id="93860413"/>
<dbReference type="KEGG" id="smu:SMU_25"/>
<dbReference type="PATRIC" id="fig|210007.7.peg.20"/>
<dbReference type="eggNOG" id="COG1381">
    <property type="taxonomic scope" value="Bacteria"/>
</dbReference>
<dbReference type="HOGENOM" id="CLU_066632_4_0_9"/>
<dbReference type="OrthoDB" id="9797083at2"/>
<dbReference type="PhylomeDB" id="Q8DWM0"/>
<dbReference type="Proteomes" id="UP000002512">
    <property type="component" value="Chromosome"/>
</dbReference>
<dbReference type="GO" id="GO:0043590">
    <property type="term" value="C:bacterial nucleoid"/>
    <property type="evidence" value="ECO:0007669"/>
    <property type="project" value="TreeGrafter"/>
</dbReference>
<dbReference type="GO" id="GO:0006310">
    <property type="term" value="P:DNA recombination"/>
    <property type="evidence" value="ECO:0007669"/>
    <property type="project" value="UniProtKB-UniRule"/>
</dbReference>
<dbReference type="GO" id="GO:0006302">
    <property type="term" value="P:double-strand break repair"/>
    <property type="evidence" value="ECO:0007669"/>
    <property type="project" value="TreeGrafter"/>
</dbReference>
<dbReference type="Gene3D" id="2.40.50.140">
    <property type="entry name" value="Nucleic acid-binding proteins"/>
    <property type="match status" value="1"/>
</dbReference>
<dbReference type="Gene3D" id="1.20.1440.120">
    <property type="entry name" value="Recombination protein O, C-terminal domain"/>
    <property type="match status" value="1"/>
</dbReference>
<dbReference type="HAMAP" id="MF_00201">
    <property type="entry name" value="RecO"/>
    <property type="match status" value="1"/>
</dbReference>
<dbReference type="InterPro" id="IPR037278">
    <property type="entry name" value="ARFGAP/RecO"/>
</dbReference>
<dbReference type="InterPro" id="IPR022572">
    <property type="entry name" value="DNA_rep/recomb_RecO_N"/>
</dbReference>
<dbReference type="InterPro" id="IPR012340">
    <property type="entry name" value="NA-bd_OB-fold"/>
</dbReference>
<dbReference type="InterPro" id="IPR003717">
    <property type="entry name" value="RecO"/>
</dbReference>
<dbReference type="InterPro" id="IPR042242">
    <property type="entry name" value="RecO_C"/>
</dbReference>
<dbReference type="NCBIfam" id="TIGR00613">
    <property type="entry name" value="reco"/>
    <property type="match status" value="1"/>
</dbReference>
<dbReference type="PANTHER" id="PTHR33991">
    <property type="entry name" value="DNA REPAIR PROTEIN RECO"/>
    <property type="match status" value="1"/>
</dbReference>
<dbReference type="PANTHER" id="PTHR33991:SF1">
    <property type="entry name" value="DNA REPAIR PROTEIN RECO"/>
    <property type="match status" value="1"/>
</dbReference>
<dbReference type="Pfam" id="PF02565">
    <property type="entry name" value="RecO_C"/>
    <property type="match status" value="1"/>
</dbReference>
<dbReference type="Pfam" id="PF11967">
    <property type="entry name" value="RecO_N"/>
    <property type="match status" value="1"/>
</dbReference>
<dbReference type="SUPFAM" id="SSF57863">
    <property type="entry name" value="ArfGap/RecO-like zinc finger"/>
    <property type="match status" value="1"/>
</dbReference>
<dbReference type="SUPFAM" id="SSF50249">
    <property type="entry name" value="Nucleic acid-binding proteins"/>
    <property type="match status" value="1"/>
</dbReference>
<comment type="function">
    <text evidence="1">Involved in DNA repair and RecF pathway recombination.</text>
</comment>
<comment type="similarity">
    <text evidence="1">Belongs to the RecO family.</text>
</comment>
<keyword id="KW-0227">DNA damage</keyword>
<keyword id="KW-0233">DNA recombination</keyword>
<keyword id="KW-0234">DNA repair</keyword>
<keyword id="KW-1185">Reference proteome</keyword>
<feature type="chain" id="PRO_0000205008" description="DNA repair protein RecO">
    <location>
        <begin position="1"/>
        <end position="251"/>
    </location>
</feature>
<proteinExistence type="inferred from homology"/>
<organism>
    <name type="scientific">Streptococcus mutans serotype c (strain ATCC 700610 / UA159)</name>
    <dbReference type="NCBI Taxonomy" id="210007"/>
    <lineage>
        <taxon>Bacteria</taxon>
        <taxon>Bacillati</taxon>
        <taxon>Bacillota</taxon>
        <taxon>Bacilli</taxon>
        <taxon>Lactobacillales</taxon>
        <taxon>Streptococcaceae</taxon>
        <taxon>Streptococcus</taxon>
    </lineage>
</organism>
<name>RECO_STRMU</name>
<sequence length="251" mass="29354">MQTKETRGLVLYNRPFREDDKLVKIFTETSGKHMFFVRHATNSKLSSVIQPLILANFILKINNHGLSYIEDYKGVSLFKEINADIYKLAYATYLVSLADAAISDAVYDAPLFAFLIKTLELMDEGLDYEILTNIFEIQILDRFGVQLNFHDCVFCHRVGLAFDFSHRYSGLLCPEHYEKDLYRSHLDPNVPYLLNQFQTLHFDSLKTISVKPDMKQKLRKFIDEVYEDYIGLRLKSKKFIDDLDHWGQVMK</sequence>